<evidence type="ECO:0000250" key="1"/>
<evidence type="ECO:0000255" key="2"/>
<evidence type="ECO:0000255" key="3">
    <source>
        <dbReference type="PROSITE-ProRule" id="PRU00059"/>
    </source>
</evidence>
<evidence type="ECO:0000255" key="4">
    <source>
        <dbReference type="PROSITE-ProRule" id="PRU00076"/>
    </source>
</evidence>
<evidence type="ECO:0000255" key="5">
    <source>
        <dbReference type="PROSITE-ProRule" id="PRU00274"/>
    </source>
</evidence>
<evidence type="ECO:0000255" key="6">
    <source>
        <dbReference type="PROSITE-ProRule" id="PRU00302"/>
    </source>
</evidence>
<evidence type="ECO:0000305" key="7"/>
<dbReference type="EMBL" id="BT020875">
    <property type="protein sequence ID" value="AAX08892.1"/>
    <property type="molecule type" value="mRNA"/>
</dbReference>
<dbReference type="EMBL" id="BT029795">
    <property type="protein sequence ID" value="ABM06063.1"/>
    <property type="molecule type" value="mRNA"/>
</dbReference>
<dbReference type="RefSeq" id="NP_001015591.1">
    <property type="nucleotide sequence ID" value="NM_001015591.1"/>
</dbReference>
<dbReference type="SMR" id="Q5E9P5"/>
<dbReference type="FunCoup" id="Q5E9P5">
    <property type="interactions" value="97"/>
</dbReference>
<dbReference type="STRING" id="9913.ENSBTAP00000016767"/>
<dbReference type="MEROPS" id="S01.998"/>
<dbReference type="GlyCosmos" id="Q5E9P5">
    <property type="glycosylation" value="1 site, No reported glycans"/>
</dbReference>
<dbReference type="GlyGen" id="Q5E9P5">
    <property type="glycosylation" value="1 site"/>
</dbReference>
<dbReference type="PaxDb" id="9913-ENSBTAP00000016767"/>
<dbReference type="GeneID" id="513841"/>
<dbReference type="KEGG" id="bta:513841"/>
<dbReference type="CTD" id="25891"/>
<dbReference type="eggNOG" id="KOG3627">
    <property type="taxonomic scope" value="Eukaryota"/>
</dbReference>
<dbReference type="InParanoid" id="Q5E9P5"/>
<dbReference type="OrthoDB" id="6147874at2759"/>
<dbReference type="Proteomes" id="UP000009136">
    <property type="component" value="Unplaced"/>
</dbReference>
<dbReference type="GO" id="GO:0005576">
    <property type="term" value="C:extracellular region"/>
    <property type="evidence" value="ECO:0007669"/>
    <property type="project" value="UniProtKB-SubCell"/>
</dbReference>
<dbReference type="GO" id="GO:0005509">
    <property type="term" value="F:calcium ion binding"/>
    <property type="evidence" value="ECO:0007669"/>
    <property type="project" value="InterPro"/>
</dbReference>
<dbReference type="CDD" id="cd00033">
    <property type="entry name" value="CCP"/>
    <property type="match status" value="2"/>
</dbReference>
<dbReference type="CDD" id="cd00041">
    <property type="entry name" value="CUB"/>
    <property type="match status" value="1"/>
</dbReference>
<dbReference type="CDD" id="cd00054">
    <property type="entry name" value="EGF_CA"/>
    <property type="match status" value="1"/>
</dbReference>
<dbReference type="CDD" id="cd00190">
    <property type="entry name" value="Tryp_SPc"/>
    <property type="match status" value="1"/>
</dbReference>
<dbReference type="FunFam" id="2.10.70.10:FF:000029">
    <property type="entry name" value="Inactive serine protease PAMR1 isoform X1"/>
    <property type="match status" value="1"/>
</dbReference>
<dbReference type="FunFam" id="2.60.120.290:FF:000067">
    <property type="entry name" value="inactive serine protease PAMR1 isoform X1"/>
    <property type="match status" value="1"/>
</dbReference>
<dbReference type="FunFam" id="2.10.25.10:FF:000970">
    <property type="entry name" value="Peptidase domain-containing-associated with muscle regeneration 1"/>
    <property type="match status" value="1"/>
</dbReference>
<dbReference type="FunFam" id="2.40.10.10:FF:000068">
    <property type="entry name" value="transmembrane protease serine 2"/>
    <property type="match status" value="1"/>
</dbReference>
<dbReference type="Gene3D" id="2.10.70.10">
    <property type="entry name" value="Complement Module, domain 1"/>
    <property type="match status" value="2"/>
</dbReference>
<dbReference type="Gene3D" id="2.10.25.10">
    <property type="entry name" value="Laminin"/>
    <property type="match status" value="1"/>
</dbReference>
<dbReference type="Gene3D" id="2.60.120.290">
    <property type="entry name" value="Spermadhesin, CUB domain"/>
    <property type="match status" value="1"/>
</dbReference>
<dbReference type="Gene3D" id="2.40.10.10">
    <property type="entry name" value="Trypsin-like serine proteases"/>
    <property type="match status" value="1"/>
</dbReference>
<dbReference type="InterPro" id="IPR000859">
    <property type="entry name" value="CUB_dom"/>
</dbReference>
<dbReference type="InterPro" id="IPR001881">
    <property type="entry name" value="EGF-like_Ca-bd_dom"/>
</dbReference>
<dbReference type="InterPro" id="IPR000742">
    <property type="entry name" value="EGF-like_dom"/>
</dbReference>
<dbReference type="InterPro" id="IPR009003">
    <property type="entry name" value="Peptidase_S1_PA"/>
</dbReference>
<dbReference type="InterPro" id="IPR043504">
    <property type="entry name" value="Peptidase_S1_PA_chymotrypsin"/>
</dbReference>
<dbReference type="InterPro" id="IPR001314">
    <property type="entry name" value="Peptidase_S1A"/>
</dbReference>
<dbReference type="InterPro" id="IPR051659">
    <property type="entry name" value="Serine_Protease_S1-Domain"/>
</dbReference>
<dbReference type="InterPro" id="IPR035914">
    <property type="entry name" value="Sperma_CUB_dom_sf"/>
</dbReference>
<dbReference type="InterPro" id="IPR035976">
    <property type="entry name" value="Sushi/SCR/CCP_sf"/>
</dbReference>
<dbReference type="InterPro" id="IPR000436">
    <property type="entry name" value="Sushi_SCR_CCP_dom"/>
</dbReference>
<dbReference type="InterPro" id="IPR001254">
    <property type="entry name" value="Trypsin_dom"/>
</dbReference>
<dbReference type="PANTHER" id="PTHR24254:SF9">
    <property type="entry name" value="INACTIVE SERINE PROTEASE PAMR1"/>
    <property type="match status" value="1"/>
</dbReference>
<dbReference type="PANTHER" id="PTHR24254">
    <property type="entry name" value="PROTHROMBIN"/>
    <property type="match status" value="1"/>
</dbReference>
<dbReference type="Pfam" id="PF00431">
    <property type="entry name" value="CUB"/>
    <property type="match status" value="1"/>
</dbReference>
<dbReference type="Pfam" id="PF00008">
    <property type="entry name" value="EGF"/>
    <property type="match status" value="1"/>
</dbReference>
<dbReference type="Pfam" id="PF00084">
    <property type="entry name" value="Sushi"/>
    <property type="match status" value="2"/>
</dbReference>
<dbReference type="Pfam" id="PF00089">
    <property type="entry name" value="Trypsin"/>
    <property type="match status" value="1"/>
</dbReference>
<dbReference type="PRINTS" id="PR00722">
    <property type="entry name" value="CHYMOTRYPSIN"/>
</dbReference>
<dbReference type="SMART" id="SM00032">
    <property type="entry name" value="CCP"/>
    <property type="match status" value="2"/>
</dbReference>
<dbReference type="SMART" id="SM00042">
    <property type="entry name" value="CUB"/>
    <property type="match status" value="1"/>
</dbReference>
<dbReference type="SMART" id="SM00181">
    <property type="entry name" value="EGF"/>
    <property type="match status" value="2"/>
</dbReference>
<dbReference type="SMART" id="SM00179">
    <property type="entry name" value="EGF_CA"/>
    <property type="match status" value="1"/>
</dbReference>
<dbReference type="SMART" id="SM00020">
    <property type="entry name" value="Tryp_SPc"/>
    <property type="match status" value="1"/>
</dbReference>
<dbReference type="SUPFAM" id="SSF57535">
    <property type="entry name" value="Complement control module/SCR domain"/>
    <property type="match status" value="1"/>
</dbReference>
<dbReference type="SUPFAM" id="SSF57196">
    <property type="entry name" value="EGF/Laminin"/>
    <property type="match status" value="1"/>
</dbReference>
<dbReference type="SUPFAM" id="SSF49854">
    <property type="entry name" value="Spermadhesin, CUB domain"/>
    <property type="match status" value="1"/>
</dbReference>
<dbReference type="SUPFAM" id="SSF50494">
    <property type="entry name" value="Trypsin-like serine proteases"/>
    <property type="match status" value="1"/>
</dbReference>
<dbReference type="PROSITE" id="PS01180">
    <property type="entry name" value="CUB"/>
    <property type="match status" value="1"/>
</dbReference>
<dbReference type="PROSITE" id="PS00022">
    <property type="entry name" value="EGF_1"/>
    <property type="match status" value="1"/>
</dbReference>
<dbReference type="PROSITE" id="PS01186">
    <property type="entry name" value="EGF_2"/>
    <property type="match status" value="1"/>
</dbReference>
<dbReference type="PROSITE" id="PS50026">
    <property type="entry name" value="EGF_3"/>
    <property type="match status" value="1"/>
</dbReference>
<dbReference type="PROSITE" id="PS50923">
    <property type="entry name" value="SUSHI"/>
    <property type="match status" value="2"/>
</dbReference>
<dbReference type="PROSITE" id="PS50240">
    <property type="entry name" value="TRYPSIN_DOM"/>
    <property type="match status" value="1"/>
</dbReference>
<accession>Q5E9P5</accession>
<organism>
    <name type="scientific">Bos taurus</name>
    <name type="common">Bovine</name>
    <dbReference type="NCBI Taxonomy" id="9913"/>
    <lineage>
        <taxon>Eukaryota</taxon>
        <taxon>Metazoa</taxon>
        <taxon>Chordata</taxon>
        <taxon>Craniata</taxon>
        <taxon>Vertebrata</taxon>
        <taxon>Euteleostomi</taxon>
        <taxon>Mammalia</taxon>
        <taxon>Eutheria</taxon>
        <taxon>Laurasiatheria</taxon>
        <taxon>Artiodactyla</taxon>
        <taxon>Ruminantia</taxon>
        <taxon>Pecora</taxon>
        <taxon>Bovidae</taxon>
        <taxon>Bovinae</taxon>
        <taxon>Bos</taxon>
    </lineage>
</organism>
<comment type="function">
    <text evidence="1">May play a role in regeneration of skeletal muscle.</text>
</comment>
<comment type="subcellular location">
    <subcellularLocation>
        <location evidence="7">Secreted</location>
    </subcellularLocation>
</comment>
<comment type="similarity">
    <text evidence="5">Belongs to the peptidase S1 family.</text>
</comment>
<comment type="caution">
    <text evidence="7">Although related to peptidase S1 family, lacks the conserved active Ser residue in position 665 which is replaced by a Thr, suggesting that it has no protease activity.</text>
</comment>
<name>PAMR1_BOVIN</name>
<sequence length="720" mass="80057">MELGWWPQLGLAFLQLLLISSLPREYTVINEACPGAEWNIMCRECCEYDQIKCECPGKKEVVGYTIPCCRNEENECDSCLIHPGCTIFENCKTCRNGSWGGTLDDFYVKGIYCAECRAGWYGGDCMRCGQVLRVPKGQILLESYPLNAHCEWTIHAKPGFIIQLRIVMLSLEFDYMCQYDYVEVRDGDSSDSQIIKRFCGNERPAPIRSTGSSLHILFHSDGSKNFDGFHAIFEEITACSSSPCFHDGTCLLDSTGSYKCACLAGYTGKHCENLLEERNCSDPGGPVNGYKKITGGPGLIHGHYAKIGTVLTFFCNSSYVLSGNEMRTCQQNGEWSGKQPICIKACREPKISDLVRRKVLPMQVQSRETPLHQLYSSAFSKQKLQDAPTKKPVLPFGDLPPGYQHLHTQLQYECISPFYRRLGSSRRTCLRTGKWSGRAPSCIPICGKTENVSAPKTQGTRWPWQAAIYRRAGGVHGGGLHKDAWFLVCSGALVNERTVVVAAHCVTDLGRVTVIKTADLKVVLGKFYRDDDRDEKSIQSLRISAIILHPNYDPILLDMDIAILKLLDKARMSTRVQPICLAAPRDLSTSFQESRITVAGWNVLADSRSPGYKDDMLRSGVVRVADSLLCEEQHEAQGIPVSVTDSMFCAGRDPTAPSDICTAETGGIAAVSFPGRASPEPRWHLVGLVSWSYDKTCSHSLSTAFTKVLPFKDWIERNMK</sequence>
<proteinExistence type="evidence at transcript level"/>
<keyword id="KW-1015">Disulfide bond</keyword>
<keyword id="KW-0245">EGF-like domain</keyword>
<keyword id="KW-0325">Glycoprotein</keyword>
<keyword id="KW-1185">Reference proteome</keyword>
<keyword id="KW-0677">Repeat</keyword>
<keyword id="KW-0964">Secreted</keyword>
<keyword id="KW-0721">Serine protease homolog</keyword>
<keyword id="KW-0732">Signal</keyword>
<keyword id="KW-0768">Sushi</keyword>
<gene>
    <name type="primary">PAMR1</name>
    <name type="synonym">RAMP</name>
</gene>
<protein>
    <recommendedName>
        <fullName>Inactive serine protease PAMR1</fullName>
    </recommendedName>
    <alternativeName>
        <fullName>Peptidase domain-containing protein associated with muscle regeneration 1</fullName>
    </alternativeName>
    <alternativeName>
        <fullName>Regeneration-associated muscle protease homolog</fullName>
    </alternativeName>
</protein>
<feature type="signal peptide" evidence="2">
    <location>
        <begin position="1"/>
        <end position="21"/>
    </location>
</feature>
<feature type="chain" id="PRO_0000287601" description="Inactive serine protease PAMR1">
    <location>
        <begin position="22"/>
        <end position="720"/>
    </location>
</feature>
<feature type="domain" description="CUB" evidence="3">
    <location>
        <begin position="128"/>
        <end position="236"/>
    </location>
</feature>
<feature type="domain" description="EGF-like" evidence="4">
    <location>
        <begin position="235"/>
        <end position="272"/>
    </location>
</feature>
<feature type="domain" description="Sushi 1" evidence="6">
    <location>
        <begin position="278"/>
        <end position="344"/>
    </location>
</feature>
<feature type="domain" description="Sushi 2" evidence="6">
    <location>
        <begin position="387"/>
        <end position="444"/>
    </location>
</feature>
<feature type="domain" description="Peptidase S1" evidence="5">
    <location>
        <begin position="445"/>
        <end position="720"/>
    </location>
</feature>
<feature type="glycosylation site" description="N-linked (GlcNAc...) asparagine" evidence="2">
    <location>
        <position position="451"/>
    </location>
</feature>
<feature type="disulfide bond" evidence="1">
    <location>
        <begin position="128"/>
        <end position="150"/>
    </location>
</feature>
<feature type="disulfide bond" evidence="1">
    <location>
        <begin position="177"/>
        <end position="199"/>
    </location>
</feature>
<feature type="disulfide bond" evidence="1">
    <location>
        <begin position="239"/>
        <end position="250"/>
    </location>
</feature>
<feature type="disulfide bond" evidence="1">
    <location>
        <begin position="244"/>
        <end position="260"/>
    </location>
</feature>
<feature type="disulfide bond" evidence="1">
    <location>
        <begin position="262"/>
        <end position="271"/>
    </location>
</feature>
<feature type="disulfide bond" evidence="1">
    <location>
        <begin position="280"/>
        <end position="329"/>
    </location>
</feature>
<feature type="disulfide bond" evidence="1">
    <location>
        <begin position="315"/>
        <end position="342"/>
    </location>
</feature>
<feature type="disulfide bond" evidence="1">
    <location>
        <begin position="414"/>
        <end position="442"/>
    </location>
</feature>
<feature type="disulfide bond" evidence="1">
    <location>
        <begin position="489"/>
        <end position="505"/>
    </location>
</feature>
<feature type="disulfide bond" evidence="1">
    <location>
        <begin position="630"/>
        <end position="649"/>
    </location>
</feature>
<feature type="disulfide bond" evidence="1">
    <location>
        <begin position="661"/>
        <end position="697"/>
    </location>
</feature>
<reference key="1">
    <citation type="journal article" date="2005" name="BMC Genomics">
        <title>Characterization of 954 bovine full-CDS cDNA sequences.</title>
        <authorList>
            <person name="Harhay G.P."/>
            <person name="Sonstegard T.S."/>
            <person name="Keele J.W."/>
            <person name="Heaton M.P."/>
            <person name="Clawson M.L."/>
            <person name="Snelling W.M."/>
            <person name="Wiedmann R.T."/>
            <person name="Van Tassell C.P."/>
            <person name="Smith T.P.L."/>
        </authorList>
    </citation>
    <scope>NUCLEOTIDE SEQUENCE [LARGE SCALE MRNA]</scope>
</reference>